<dbReference type="EC" id="4.2.1.1"/>
<dbReference type="EMBL" id="M76423">
    <property type="protein sequence ID" value="AAA51923.1"/>
    <property type="molecule type" value="Genomic_DNA"/>
</dbReference>
<dbReference type="EMBL" id="M76420">
    <property type="protein sequence ID" value="AAA51923.1"/>
    <property type="status" value="JOINED"/>
    <property type="molecule type" value="Genomic_DNA"/>
</dbReference>
<dbReference type="EMBL" id="M76421">
    <property type="protein sequence ID" value="AAA51923.1"/>
    <property type="status" value="JOINED"/>
    <property type="molecule type" value="Genomic_DNA"/>
</dbReference>
<dbReference type="EMBL" id="M76422">
    <property type="protein sequence ID" value="AAA51923.1"/>
    <property type="status" value="JOINED"/>
    <property type="molecule type" value="Genomic_DNA"/>
</dbReference>
<dbReference type="EMBL" id="AY075019">
    <property type="protein sequence ID" value="AAL78167.1"/>
    <property type="molecule type" value="mRNA"/>
</dbReference>
<dbReference type="EMBL" id="AY075020">
    <property type="protein sequence ID" value="AAL78168.1"/>
    <property type="molecule type" value="mRNA"/>
</dbReference>
<dbReference type="EMBL" id="AC004638">
    <property type="protein sequence ID" value="AAC23785.1"/>
    <property type="molecule type" value="Genomic_DNA"/>
</dbReference>
<dbReference type="EMBL" id="AC044802">
    <property type="status" value="NOT_ANNOTATED_CDS"/>
    <property type="molecule type" value="Genomic_DNA"/>
</dbReference>
<dbReference type="EMBL" id="CH471092">
    <property type="protein sequence ID" value="EAW83047.1"/>
    <property type="molecule type" value="Genomic_DNA"/>
</dbReference>
<dbReference type="EMBL" id="BC033865">
    <property type="protein sequence ID" value="AAH33865.1"/>
    <property type="molecule type" value="mRNA"/>
</dbReference>
<dbReference type="CCDS" id="CCDS10821.1">
    <molecule id="P43166-1"/>
</dbReference>
<dbReference type="CCDS" id="CCDS42173.1">
    <molecule id="P43166-2"/>
</dbReference>
<dbReference type="PIR" id="A55272">
    <property type="entry name" value="CRHU7"/>
</dbReference>
<dbReference type="RefSeq" id="NP_001014435.1">
    <molecule id="P43166-2"/>
    <property type="nucleotide sequence ID" value="NM_001014435.2"/>
</dbReference>
<dbReference type="RefSeq" id="NP_001352266.1">
    <molecule id="P43166-2"/>
    <property type="nucleotide sequence ID" value="NM_001365337.2"/>
</dbReference>
<dbReference type="RefSeq" id="NP_005173.1">
    <molecule id="P43166-1"/>
    <property type="nucleotide sequence ID" value="NM_005182.3"/>
</dbReference>
<dbReference type="RefSeq" id="XP_005256193.1">
    <property type="nucleotide sequence ID" value="XM_005256136.3"/>
</dbReference>
<dbReference type="RefSeq" id="XP_011521614.1">
    <property type="nucleotide sequence ID" value="XM_011523312.1"/>
</dbReference>
<dbReference type="PDB" id="3MDZ">
    <property type="method" value="X-ray"/>
    <property type="resolution" value="2.32 A"/>
    <property type="chains" value="A=5-262"/>
</dbReference>
<dbReference type="PDB" id="3ML5">
    <property type="method" value="X-ray"/>
    <property type="resolution" value="2.05 A"/>
    <property type="chains" value="A=1-264"/>
</dbReference>
<dbReference type="PDB" id="6G4T">
    <property type="method" value="X-ray"/>
    <property type="resolution" value="1.91 A"/>
    <property type="chains" value="A=1-264"/>
</dbReference>
<dbReference type="PDB" id="6H36">
    <property type="method" value="X-ray"/>
    <property type="resolution" value="1.85 A"/>
    <property type="chains" value="A=1-264"/>
</dbReference>
<dbReference type="PDB" id="6H37">
    <property type="method" value="X-ray"/>
    <property type="resolution" value="1.90 A"/>
    <property type="chains" value="A=1-264"/>
</dbReference>
<dbReference type="PDB" id="6H38">
    <property type="method" value="X-ray"/>
    <property type="resolution" value="1.70 A"/>
    <property type="chains" value="A=1-264"/>
</dbReference>
<dbReference type="PDB" id="6SDT">
    <property type="method" value="X-ray"/>
    <property type="resolution" value="1.94 A"/>
    <property type="chains" value="A=1-264"/>
</dbReference>
<dbReference type="PDB" id="6ZR9">
    <property type="method" value="X-ray"/>
    <property type="resolution" value="2.05 A"/>
    <property type="chains" value="A=1-264"/>
</dbReference>
<dbReference type="PDB" id="7NC4">
    <property type="method" value="X-ray"/>
    <property type="resolution" value="1.60 A"/>
    <property type="chains" value="A=1-264"/>
</dbReference>
<dbReference type="PDB" id="7P1A">
    <property type="method" value="X-ray"/>
    <property type="resolution" value="1.58 A"/>
    <property type="chains" value="A=1-264"/>
</dbReference>
<dbReference type="PDB" id="8Q3U">
    <property type="method" value="X-ray"/>
    <property type="resolution" value="1.10 A"/>
    <property type="chains" value="A=1-264"/>
</dbReference>
<dbReference type="PDBsum" id="3MDZ"/>
<dbReference type="PDBsum" id="3ML5"/>
<dbReference type="PDBsum" id="6G4T"/>
<dbReference type="PDBsum" id="6H36"/>
<dbReference type="PDBsum" id="6H37"/>
<dbReference type="PDBsum" id="6H38"/>
<dbReference type="PDBsum" id="6SDT"/>
<dbReference type="PDBsum" id="6ZR9"/>
<dbReference type="PDBsum" id="7NC4"/>
<dbReference type="PDBsum" id="7P1A"/>
<dbReference type="PDBsum" id="8Q3U"/>
<dbReference type="SMR" id="P43166"/>
<dbReference type="FunCoup" id="P43166">
    <property type="interactions" value="400"/>
</dbReference>
<dbReference type="STRING" id="9606.ENSP00000345659"/>
<dbReference type="BindingDB" id="P43166"/>
<dbReference type="ChEMBL" id="CHEMBL2326"/>
<dbReference type="DrugBank" id="DB00819">
    <property type="generic name" value="Acetazolamide"/>
</dbReference>
<dbReference type="DrugBank" id="DB00562">
    <property type="generic name" value="Benzthiazide"/>
</dbReference>
<dbReference type="DrugBank" id="DB00606">
    <property type="generic name" value="Cyclothiazide"/>
</dbReference>
<dbReference type="DrugBank" id="DB01144">
    <property type="generic name" value="Diclofenamide"/>
</dbReference>
<dbReference type="DrugBank" id="DB08846">
    <property type="generic name" value="Ellagic acid"/>
</dbReference>
<dbReference type="DrugBank" id="DB00311">
    <property type="generic name" value="Ethoxzolamide"/>
</dbReference>
<dbReference type="DrugBank" id="DB00774">
    <property type="generic name" value="Hydroflumethiazide"/>
</dbReference>
<dbReference type="DrugBank" id="DB00703">
    <property type="generic name" value="Methazolamide"/>
</dbReference>
<dbReference type="DrugBank" id="DB00909">
    <property type="generic name" value="Zonisamide"/>
</dbReference>
<dbReference type="DrugCentral" id="P43166"/>
<dbReference type="GuidetoPHARMACOLOGY" id="2749"/>
<dbReference type="iPTMnet" id="P43166"/>
<dbReference type="PhosphoSitePlus" id="P43166"/>
<dbReference type="BioMuta" id="CA7"/>
<dbReference type="DMDM" id="1168744"/>
<dbReference type="MassIVE" id="P43166"/>
<dbReference type="PaxDb" id="9606-ENSP00000345659"/>
<dbReference type="PeptideAtlas" id="P43166"/>
<dbReference type="ProteomicsDB" id="55595">
    <molecule id="P43166-1"/>
</dbReference>
<dbReference type="ProteomicsDB" id="70472"/>
<dbReference type="Antibodypedia" id="29327">
    <property type="antibodies" value="137 antibodies from 26 providers"/>
</dbReference>
<dbReference type="DNASU" id="766"/>
<dbReference type="Ensembl" id="ENST00000338437.7">
    <molecule id="P43166-1"/>
    <property type="protein sequence ID" value="ENSP00000345659.2"/>
    <property type="gene ID" value="ENSG00000168748.14"/>
</dbReference>
<dbReference type="Ensembl" id="ENST00000394069.3">
    <molecule id="P43166-2"/>
    <property type="protein sequence ID" value="ENSP00000377632.3"/>
    <property type="gene ID" value="ENSG00000168748.14"/>
</dbReference>
<dbReference type="GeneID" id="766"/>
<dbReference type="KEGG" id="hsa:766"/>
<dbReference type="MANE-Select" id="ENST00000338437.7">
    <property type="protein sequence ID" value="ENSP00000345659.2"/>
    <property type="RefSeq nucleotide sequence ID" value="NM_005182.3"/>
    <property type="RefSeq protein sequence ID" value="NP_005173.1"/>
</dbReference>
<dbReference type="UCSC" id="uc002eqi.4">
    <molecule id="P43166-1"/>
    <property type="organism name" value="human"/>
</dbReference>
<dbReference type="AGR" id="HGNC:1381"/>
<dbReference type="CTD" id="766"/>
<dbReference type="DisGeNET" id="766"/>
<dbReference type="GeneCards" id="CA7"/>
<dbReference type="HGNC" id="HGNC:1381">
    <property type="gene designation" value="CA7"/>
</dbReference>
<dbReference type="HPA" id="ENSG00000168748">
    <property type="expression patterns" value="Tissue enriched (intestine)"/>
</dbReference>
<dbReference type="MIM" id="114770">
    <property type="type" value="gene"/>
</dbReference>
<dbReference type="neXtProt" id="NX_P43166"/>
<dbReference type="OpenTargets" id="ENSG00000168748"/>
<dbReference type="PharmGKB" id="PA25996"/>
<dbReference type="VEuPathDB" id="HostDB:ENSG00000168748"/>
<dbReference type="eggNOG" id="KOG0382">
    <property type="taxonomic scope" value="Eukaryota"/>
</dbReference>
<dbReference type="GeneTree" id="ENSGT00940000159757"/>
<dbReference type="HOGENOM" id="CLU_039326_2_1_1"/>
<dbReference type="InParanoid" id="P43166"/>
<dbReference type="OMA" id="GHTIQAN"/>
<dbReference type="OrthoDB" id="429145at2759"/>
<dbReference type="PAN-GO" id="P43166">
    <property type="GO annotations" value="3 GO annotations based on evolutionary models"/>
</dbReference>
<dbReference type="PhylomeDB" id="P43166"/>
<dbReference type="TreeFam" id="TF316425"/>
<dbReference type="BRENDA" id="4.2.1.1">
    <property type="organism ID" value="2681"/>
</dbReference>
<dbReference type="PathwayCommons" id="P43166"/>
<dbReference type="Reactome" id="R-HSA-1475029">
    <property type="pathway name" value="Reversible hydration of carbon dioxide"/>
</dbReference>
<dbReference type="SABIO-RK" id="P43166"/>
<dbReference type="BioGRID-ORCS" id="766">
    <property type="hits" value="23 hits in 1158 CRISPR screens"/>
</dbReference>
<dbReference type="ChiTaRS" id="CA7">
    <property type="organism name" value="human"/>
</dbReference>
<dbReference type="EvolutionaryTrace" id="P43166"/>
<dbReference type="GeneWiki" id="Carbonic_anhydrase_7"/>
<dbReference type="GenomeRNAi" id="766"/>
<dbReference type="Pharos" id="P43166">
    <property type="development level" value="Tclin"/>
</dbReference>
<dbReference type="PRO" id="PR:P43166"/>
<dbReference type="Proteomes" id="UP000005640">
    <property type="component" value="Chromosome 16"/>
</dbReference>
<dbReference type="RNAct" id="P43166">
    <property type="molecule type" value="protein"/>
</dbReference>
<dbReference type="Bgee" id="ENSG00000168748">
    <property type="expression patterns" value="Expressed in mucosa of transverse colon and 73 other cell types or tissues"/>
</dbReference>
<dbReference type="ExpressionAtlas" id="P43166">
    <property type="expression patterns" value="baseline and differential"/>
</dbReference>
<dbReference type="GO" id="GO:0005737">
    <property type="term" value="C:cytoplasm"/>
    <property type="evidence" value="ECO:0000318"/>
    <property type="project" value="GO_Central"/>
</dbReference>
<dbReference type="GO" id="GO:0005829">
    <property type="term" value="C:cytosol"/>
    <property type="evidence" value="ECO:0000304"/>
    <property type="project" value="Reactome"/>
</dbReference>
<dbReference type="GO" id="GO:0004089">
    <property type="term" value="F:carbonate dehydratase activity"/>
    <property type="evidence" value="ECO:0000318"/>
    <property type="project" value="GO_Central"/>
</dbReference>
<dbReference type="GO" id="GO:0008270">
    <property type="term" value="F:zinc ion binding"/>
    <property type="evidence" value="ECO:0007669"/>
    <property type="project" value="InterPro"/>
</dbReference>
<dbReference type="GO" id="GO:0070050">
    <property type="term" value="P:neuron cellular homeostasis"/>
    <property type="evidence" value="ECO:0007669"/>
    <property type="project" value="Ensembl"/>
</dbReference>
<dbReference type="GO" id="GO:0032849">
    <property type="term" value="P:positive regulation of cellular pH reduction"/>
    <property type="evidence" value="ECO:0007669"/>
    <property type="project" value="Ensembl"/>
</dbReference>
<dbReference type="GO" id="GO:0032230">
    <property type="term" value="P:positive regulation of synaptic transmission, GABAergic"/>
    <property type="evidence" value="ECO:0007669"/>
    <property type="project" value="Ensembl"/>
</dbReference>
<dbReference type="GO" id="GO:2001225">
    <property type="term" value="P:regulation of chloride transport"/>
    <property type="evidence" value="ECO:0007669"/>
    <property type="project" value="Ensembl"/>
</dbReference>
<dbReference type="GO" id="GO:0051453">
    <property type="term" value="P:regulation of intracellular pH"/>
    <property type="evidence" value="ECO:0000318"/>
    <property type="project" value="GO_Central"/>
</dbReference>
<dbReference type="CDD" id="cd03149">
    <property type="entry name" value="alpha_CA_VII"/>
    <property type="match status" value="1"/>
</dbReference>
<dbReference type="FunFam" id="3.10.200.10:FF:000001">
    <property type="entry name" value="Carbonic anhydrase 2"/>
    <property type="match status" value="1"/>
</dbReference>
<dbReference type="Gene3D" id="3.10.200.10">
    <property type="entry name" value="Alpha carbonic anhydrase"/>
    <property type="match status" value="1"/>
</dbReference>
<dbReference type="InterPro" id="IPR041890">
    <property type="entry name" value="Alpha_CA_VII"/>
</dbReference>
<dbReference type="InterPro" id="IPR001148">
    <property type="entry name" value="CA_dom"/>
</dbReference>
<dbReference type="InterPro" id="IPR036398">
    <property type="entry name" value="CA_dom_sf"/>
</dbReference>
<dbReference type="InterPro" id="IPR023561">
    <property type="entry name" value="Carbonic_anhydrase_a-class"/>
</dbReference>
<dbReference type="InterPro" id="IPR018338">
    <property type="entry name" value="Carbonic_anhydrase_a-class_CS"/>
</dbReference>
<dbReference type="PANTHER" id="PTHR18952">
    <property type="entry name" value="CARBONIC ANHYDRASE"/>
    <property type="match status" value="1"/>
</dbReference>
<dbReference type="PANTHER" id="PTHR18952:SF124">
    <property type="entry name" value="CARBONIC ANHYDRASE 7"/>
    <property type="match status" value="1"/>
</dbReference>
<dbReference type="Pfam" id="PF00194">
    <property type="entry name" value="Carb_anhydrase"/>
    <property type="match status" value="1"/>
</dbReference>
<dbReference type="SMART" id="SM01057">
    <property type="entry name" value="Carb_anhydrase"/>
    <property type="match status" value="1"/>
</dbReference>
<dbReference type="SUPFAM" id="SSF51069">
    <property type="entry name" value="Carbonic anhydrase"/>
    <property type="match status" value="1"/>
</dbReference>
<dbReference type="PROSITE" id="PS00162">
    <property type="entry name" value="ALPHA_CA_1"/>
    <property type="match status" value="1"/>
</dbReference>
<dbReference type="PROSITE" id="PS51144">
    <property type="entry name" value="ALPHA_CA_2"/>
    <property type="match status" value="1"/>
</dbReference>
<name>CAH7_HUMAN</name>
<organism>
    <name type="scientific">Homo sapiens</name>
    <name type="common">Human</name>
    <dbReference type="NCBI Taxonomy" id="9606"/>
    <lineage>
        <taxon>Eukaryota</taxon>
        <taxon>Metazoa</taxon>
        <taxon>Chordata</taxon>
        <taxon>Craniata</taxon>
        <taxon>Vertebrata</taxon>
        <taxon>Euteleostomi</taxon>
        <taxon>Mammalia</taxon>
        <taxon>Eutheria</taxon>
        <taxon>Euarchontoglires</taxon>
        <taxon>Primates</taxon>
        <taxon>Haplorrhini</taxon>
        <taxon>Catarrhini</taxon>
        <taxon>Hominidae</taxon>
        <taxon>Homo</taxon>
    </lineage>
</organism>
<protein>
    <recommendedName>
        <fullName>Carbonic anhydrase 7</fullName>
        <ecNumber>4.2.1.1</ecNumber>
    </recommendedName>
    <alternativeName>
        <fullName>Carbonate dehydratase VII</fullName>
    </alternativeName>
    <alternativeName>
        <fullName>Carbonic anhydrase VII</fullName>
        <shortName>CA-VII</shortName>
    </alternativeName>
</protein>
<accession>P43166</accession>
<accession>Q541F0</accession>
<accession>Q86YU0</accession>
<gene>
    <name type="primary">CA7</name>
</gene>
<proteinExistence type="evidence at protein level"/>
<sequence length="264" mass="29658">MTGHHGWGYGQDDGPSHWHKLYPIAQGDRQSPINIISSQAVYSPSLQPLELSYEACMSLSITNNGHSVQVDFNDSDDRTVVTGGPLEGPYRLKQFHFHWGKKHDVGSEHTVDGKSFPSELHLVHWNAKKYSTFGEAASAPDGLAVVGVFLETGDEHPSMNRLTDALYMVRFKGTKAQFSCFNPKCLLPASRHYWTYPGSLTTPPLSESVTWIVLREPICISERQMGKFRSLLFTSEDDERIHMVNNFRPPQPLKGRVVKASFRA</sequence>
<reference key="1">
    <citation type="journal article" date="1991" name="Genomics">
        <title>Characterization of the human gene for a newly discovered carbonic anhydrase, CA VII, and its localization to chromosome 16.</title>
        <authorList>
            <person name="Montgomery J.C."/>
            <person name="Venta P.J."/>
            <person name="Eddy R.L."/>
            <person name="Fukushima Y.S."/>
            <person name="Shows T.B."/>
            <person name="Tashian R.E."/>
        </authorList>
    </citation>
    <scope>NUCLEOTIDE SEQUENCE [GENOMIC DNA] (ISOFORM 1)</scope>
</reference>
<reference key="2">
    <citation type="submission" date="2002-01" db="EMBL/GenBank/DDBJ databases">
        <title>Molecular identification of carbonic anhydrases (CA) and CA-related (CAR) genes.</title>
        <authorList>
            <person name="Chen Y."/>
            <person name="Huang C.-H."/>
        </authorList>
    </citation>
    <scope>NUCLEOTIDE SEQUENCE [MRNA] (ISOFORMS 1 AND 2)</scope>
</reference>
<reference key="3">
    <citation type="journal article" date="1999" name="Genomics">
        <title>Genome duplications and other features in 12 Mb of DNA sequence from human chromosome 16p and 16q.</title>
        <authorList>
            <person name="Loftus B.J."/>
            <person name="Kim U.-J."/>
            <person name="Sneddon V.P."/>
            <person name="Kalush F."/>
            <person name="Brandon R."/>
            <person name="Fuhrmann J."/>
            <person name="Mason T."/>
            <person name="Crosby M.L."/>
            <person name="Barnstead M."/>
            <person name="Cronin L."/>
            <person name="Mays A.D."/>
            <person name="Cao Y."/>
            <person name="Xu R.X."/>
            <person name="Kang H.-L."/>
            <person name="Mitchell S."/>
            <person name="Eichler E.E."/>
            <person name="Harris P.C."/>
            <person name="Venter J.C."/>
            <person name="Adams M.D."/>
        </authorList>
    </citation>
    <scope>NUCLEOTIDE SEQUENCE [LARGE SCALE GENOMIC DNA]</scope>
</reference>
<reference key="4">
    <citation type="submission" date="2005-07" db="EMBL/GenBank/DDBJ databases">
        <authorList>
            <person name="Mural R.J."/>
            <person name="Istrail S."/>
            <person name="Sutton G."/>
            <person name="Florea L."/>
            <person name="Halpern A.L."/>
            <person name="Mobarry C.M."/>
            <person name="Lippert R."/>
            <person name="Walenz B."/>
            <person name="Shatkay H."/>
            <person name="Dew I."/>
            <person name="Miller J.R."/>
            <person name="Flanigan M.J."/>
            <person name="Edwards N.J."/>
            <person name="Bolanos R."/>
            <person name="Fasulo D."/>
            <person name="Halldorsson B.V."/>
            <person name="Hannenhalli S."/>
            <person name="Turner R."/>
            <person name="Yooseph S."/>
            <person name="Lu F."/>
            <person name="Nusskern D.R."/>
            <person name="Shue B.C."/>
            <person name="Zheng X.H."/>
            <person name="Zhong F."/>
            <person name="Delcher A.L."/>
            <person name="Huson D.H."/>
            <person name="Kravitz S.A."/>
            <person name="Mouchard L."/>
            <person name="Reinert K."/>
            <person name="Remington K.A."/>
            <person name="Clark A.G."/>
            <person name="Waterman M.S."/>
            <person name="Eichler E.E."/>
            <person name="Adams M.D."/>
            <person name="Hunkapiller M.W."/>
            <person name="Myers E.W."/>
            <person name="Venter J.C."/>
        </authorList>
    </citation>
    <scope>NUCLEOTIDE SEQUENCE [LARGE SCALE GENOMIC DNA]</scope>
</reference>
<reference key="5">
    <citation type="journal article" date="2004" name="Genome Res.">
        <title>The status, quality, and expansion of the NIH full-length cDNA project: the Mammalian Gene Collection (MGC).</title>
        <authorList>
            <consortium name="The MGC Project Team"/>
        </authorList>
    </citation>
    <scope>NUCLEOTIDE SEQUENCE [LARGE SCALE MRNA] (ISOFORM 1)</scope>
    <source>
        <tissue>Colon</tissue>
        <tissue>Kidney</tissue>
        <tissue>Stomach</tissue>
    </source>
</reference>
<reference key="6">
    <citation type="journal article" date="2006" name="Chemistry">
        <title>Carbonic anhydrase activators. Activation of isozymes I, II, IV, VA, VII, and XIV with l- and d-histidine and crystallographic analysis of their adducts with isoform II: engineering proton-transfer processes within the active site of an enzyme.</title>
        <authorList>
            <person name="Temperini C."/>
            <person name="Scozzafava A."/>
            <person name="Vullo D."/>
            <person name="Supuran C.T."/>
        </authorList>
    </citation>
    <scope>ACTIVITY REGULATION</scope>
</reference>
<reference key="7">
    <citation type="journal article" date="2006" name="J. Med. Chem.">
        <title>Carbonic anhydrase activators. Activation of isoforms I, II, IV, VA, VII, and XIV with L- and D-phenylalanine and crystallographic analysis of their adducts with isozyme II: stereospecific recognition within the active site of an enzyme and its consequences for the drug design.</title>
        <authorList>
            <person name="Temperini C."/>
            <person name="Scozzafava A."/>
            <person name="Vullo D."/>
            <person name="Supuran C.T."/>
        </authorList>
    </citation>
    <scope>ACTIVITY REGULATION</scope>
</reference>
<reference key="8">
    <citation type="journal article" date="2007" name="Angew. Chem. Int. Ed. Engl.">
        <title>Saccharin inhibits carbonic anhydrases: possible explanation for its unpleasant metallic aftertaste.</title>
        <authorList>
            <person name="Koehler K."/>
            <person name="Hillebrecht A."/>
            <person name="Schulze Wischeler J."/>
            <person name="Innocenti A."/>
            <person name="Heine A."/>
            <person name="Supuran C.T."/>
            <person name="Klebe G."/>
        </authorList>
    </citation>
    <scope>ACTIVITY REGULATION</scope>
</reference>
<reference key="9">
    <citation type="journal article" date="2007" name="Bioorg. Med. Chem. Lett.">
        <title>Carbonic anhydrase activators: L-Adrenaline plugs the active site entrance of isozyme II, activating better isoforms I, IV, VA, VII, and XIV.</title>
        <authorList>
            <person name="Temperini C."/>
            <person name="Innocenti A."/>
            <person name="Scozzafava A."/>
            <person name="Mastrolorenzo A."/>
            <person name="Supuran C.T."/>
        </authorList>
    </citation>
    <scope>ACTIVITY REGULATION</scope>
</reference>
<reference key="10">
    <citation type="journal article" date="2007" name="Bioorg. Med. Chem. Lett.">
        <title>Phosph(on)ate as a zinc-binding group in metalloenzyme inhibitors: X-ray crystal structure of the antiviral drug foscarnet complexed to human carbonic anhydrase I.</title>
        <authorList>
            <person name="Temperini C."/>
            <person name="Innocenti A."/>
            <person name="Guerri A."/>
            <person name="Scozzafava A."/>
            <person name="Rusconi S."/>
            <person name="Supuran C.T."/>
        </authorList>
    </citation>
    <scope>ACTIVITY REGULATION</scope>
</reference>
<reference key="11">
    <citation type="journal article" date="2009" name="Bioorg. Med. Chem. Lett.">
        <title>A thiabendazole sulfonamide shows potent inhibitory activity against mammalian and nematode alpha-carbonic anhydrases.</title>
        <authorList>
            <person name="Crocetti L."/>
            <person name="Maresca A."/>
            <person name="Temperini C."/>
            <person name="Hall R.A."/>
            <person name="Scozzafava A."/>
            <person name="Muehlschlegel F.A."/>
            <person name="Supuran C.T."/>
        </authorList>
    </citation>
    <scope>ACTIVITY REGULATION</scope>
</reference>
<reference key="12">
    <citation type="journal article" date="2009" name="J. Am. Chem. Soc.">
        <title>Non-zinc mediated inhibition of carbonic anhydrases: coumarins are a new class of suicide inhibitors.</title>
        <authorList>
            <person name="Maresca A."/>
            <person name="Temperini C."/>
            <person name="Vu H."/>
            <person name="Pham N.B."/>
            <person name="Poulsen S.-A."/>
            <person name="Scozzafava A."/>
            <person name="Quinn R.J."/>
            <person name="Supuran C.T."/>
        </authorList>
    </citation>
    <scope>ACTIVITY REGULATION</scope>
</reference>
<reference key="13">
    <citation type="submission" date="2010-06" db="PDB data bank">
        <title>Crystal structure of human carbonic anhydrase VII [isoform 1], CA7.</title>
        <authorList>
            <consortium name="Structural genomics consortium (SGC)"/>
        </authorList>
    </citation>
    <scope>X-RAY CRYSTALLOGRAPHY (2.32 ANGSTROMS) OF 5-262 IN COMPLEX WITH ZINC IONS</scope>
</reference>
<feature type="chain" id="PRO_0000077431" description="Carbonic anhydrase 7">
    <location>
        <begin position="1"/>
        <end position="264"/>
    </location>
</feature>
<feature type="domain" description="Alpha-carbonic anhydrase" evidence="2">
    <location>
        <begin position="5"/>
        <end position="262"/>
    </location>
</feature>
<feature type="active site" description="Proton donor/acceptor" evidence="1">
    <location>
        <position position="66"/>
    </location>
</feature>
<feature type="binding site" evidence="10">
    <location>
        <position position="96"/>
    </location>
    <ligand>
        <name>Zn(2+)</name>
        <dbReference type="ChEBI" id="CHEBI:29105"/>
        <note>catalytic</note>
    </ligand>
</feature>
<feature type="binding site" evidence="10">
    <location>
        <position position="98"/>
    </location>
    <ligand>
        <name>Zn(2+)</name>
        <dbReference type="ChEBI" id="CHEBI:29105"/>
        <note>catalytic</note>
    </ligand>
</feature>
<feature type="binding site" evidence="10">
    <location>
        <position position="121"/>
    </location>
    <ligand>
        <name>Zn(2+)</name>
        <dbReference type="ChEBI" id="CHEBI:29105"/>
        <note>catalytic</note>
    </ligand>
</feature>
<feature type="binding site" evidence="1">
    <location>
        <begin position="201"/>
        <end position="202"/>
    </location>
    <ligand>
        <name>substrate</name>
    </ligand>
</feature>
<feature type="splice variant" id="VSP_044254" description="In isoform 2." evidence="11">
    <location>
        <begin position="1"/>
        <end position="56"/>
    </location>
</feature>
<feature type="turn" evidence="14">
    <location>
        <begin position="11"/>
        <end position="13"/>
    </location>
</feature>
<feature type="helix" evidence="14">
    <location>
        <begin position="15"/>
        <end position="20"/>
    </location>
</feature>
<feature type="helix" evidence="14">
    <location>
        <begin position="23"/>
        <end position="26"/>
    </location>
</feature>
<feature type="strand" evidence="14">
    <location>
        <begin position="27"/>
        <end position="29"/>
    </location>
</feature>
<feature type="helix" evidence="14">
    <location>
        <begin position="37"/>
        <end position="39"/>
    </location>
</feature>
<feature type="strand" evidence="14">
    <location>
        <begin position="40"/>
        <end position="42"/>
    </location>
</feature>
<feature type="strand" evidence="14">
    <location>
        <begin position="46"/>
        <end position="52"/>
    </location>
</feature>
<feature type="strand" evidence="14">
    <location>
        <begin position="58"/>
        <end position="63"/>
    </location>
</feature>
<feature type="strand" evidence="14">
    <location>
        <begin position="68"/>
        <end position="72"/>
    </location>
</feature>
<feature type="strand" evidence="14">
    <location>
        <begin position="79"/>
        <end position="84"/>
    </location>
</feature>
<feature type="strand" evidence="14">
    <location>
        <begin position="90"/>
        <end position="99"/>
    </location>
</feature>
<feature type="strand" evidence="14">
    <location>
        <begin position="108"/>
        <end position="111"/>
    </location>
</feature>
<feature type="strand" evidence="14">
    <location>
        <begin position="117"/>
        <end position="125"/>
    </location>
</feature>
<feature type="turn" evidence="14">
    <location>
        <begin position="127"/>
        <end position="129"/>
    </location>
</feature>
<feature type="helix" evidence="14">
    <location>
        <begin position="133"/>
        <end position="136"/>
    </location>
</feature>
<feature type="strand" evidence="14">
    <location>
        <begin position="142"/>
        <end position="154"/>
    </location>
</feature>
<feature type="helix" evidence="14">
    <location>
        <begin position="157"/>
        <end position="165"/>
    </location>
</feature>
<feature type="helix" evidence="14">
    <location>
        <begin position="166"/>
        <end position="169"/>
    </location>
</feature>
<feature type="strand" evidence="14">
    <location>
        <begin position="174"/>
        <end position="177"/>
    </location>
</feature>
<feature type="helix" evidence="14">
    <location>
        <begin position="183"/>
        <end position="186"/>
    </location>
</feature>
<feature type="strand" evidence="14">
    <location>
        <begin position="193"/>
        <end position="198"/>
    </location>
</feature>
<feature type="strand" evidence="14">
    <location>
        <begin position="209"/>
        <end position="216"/>
    </location>
</feature>
<feature type="strand" evidence="14">
    <location>
        <begin position="218"/>
        <end position="220"/>
    </location>
</feature>
<feature type="helix" evidence="14">
    <location>
        <begin position="222"/>
        <end position="230"/>
    </location>
</feature>
<feature type="strand" evidence="14">
    <location>
        <begin position="232"/>
        <end position="234"/>
    </location>
</feature>
<feature type="strand" evidence="13">
    <location>
        <begin position="236"/>
        <end position="238"/>
    </location>
</feature>
<feature type="strand" evidence="14">
    <location>
        <begin position="259"/>
        <end position="262"/>
    </location>
</feature>
<keyword id="KW-0002">3D-structure</keyword>
<keyword id="KW-0025">Alternative splicing</keyword>
<keyword id="KW-0963">Cytoplasm</keyword>
<keyword id="KW-0456">Lyase</keyword>
<keyword id="KW-0479">Metal-binding</keyword>
<keyword id="KW-1267">Proteomics identification</keyword>
<keyword id="KW-1185">Reference proteome</keyword>
<keyword id="KW-0862">Zinc</keyword>
<evidence type="ECO:0000250" key="1">
    <source>
        <dbReference type="UniProtKB" id="P00918"/>
    </source>
</evidence>
<evidence type="ECO:0000255" key="2">
    <source>
        <dbReference type="PROSITE-ProRule" id="PRU01134"/>
    </source>
</evidence>
<evidence type="ECO:0000269" key="3">
    <source>
    </source>
</evidence>
<evidence type="ECO:0000269" key="4">
    <source>
    </source>
</evidence>
<evidence type="ECO:0000269" key="5">
    <source>
    </source>
</evidence>
<evidence type="ECO:0000269" key="6">
    <source>
    </source>
</evidence>
<evidence type="ECO:0000269" key="7">
    <source>
    </source>
</evidence>
<evidence type="ECO:0000269" key="8">
    <source>
    </source>
</evidence>
<evidence type="ECO:0000269" key="9">
    <source>
    </source>
</evidence>
<evidence type="ECO:0000269" key="10">
    <source ref="13"/>
</evidence>
<evidence type="ECO:0000303" key="11">
    <source ref="2"/>
</evidence>
<evidence type="ECO:0000305" key="12"/>
<evidence type="ECO:0007829" key="13">
    <source>
        <dbReference type="PDB" id="7P1A"/>
    </source>
</evidence>
<evidence type="ECO:0007829" key="14">
    <source>
        <dbReference type="PDB" id="8Q3U"/>
    </source>
</evidence>
<comment type="function">
    <text>Reversible hydration of carbon dioxide.</text>
</comment>
<comment type="catalytic activity">
    <reaction>
        <text>hydrogencarbonate + H(+) = CO2 + H2O</text>
        <dbReference type="Rhea" id="RHEA:10748"/>
        <dbReference type="ChEBI" id="CHEBI:15377"/>
        <dbReference type="ChEBI" id="CHEBI:15378"/>
        <dbReference type="ChEBI" id="CHEBI:16526"/>
        <dbReference type="ChEBI" id="CHEBI:17544"/>
        <dbReference type="EC" id="4.2.1.1"/>
    </reaction>
</comment>
<comment type="cofactor">
    <cofactor evidence="10">
        <name>Zn(2+)</name>
        <dbReference type="ChEBI" id="CHEBI:29105"/>
    </cofactor>
</comment>
<comment type="activity regulation">
    <text evidence="3 4 5 6 7 8 9">Activated by histamine, L-adrenaline, L- and D-histidine, and L- and D-phenylalanine. Inhibited by coumarins, sulfonamide derivatives such as acetazolamide (AZA), by saccharin and Foscarnet (phosphonoformate trisodium salt).</text>
</comment>
<comment type="subcellular location">
    <subcellularLocation>
        <location evidence="12">Cytoplasm</location>
    </subcellularLocation>
</comment>
<comment type="alternative products">
    <event type="alternative splicing"/>
    <isoform>
        <id>P43166-1</id>
        <name>1</name>
        <sequence type="displayed"/>
    </isoform>
    <isoform>
        <id>P43166-2</id>
        <name>2</name>
        <sequence type="described" ref="VSP_044254"/>
    </isoform>
</comment>
<comment type="similarity">
    <text evidence="12">Belongs to the alpha-carbonic anhydrase family.</text>
</comment>